<dbReference type="EC" id="3.1.11.6" evidence="1"/>
<dbReference type="EMBL" id="CP001016">
    <property type="protein sequence ID" value="ACB94880.1"/>
    <property type="molecule type" value="Genomic_DNA"/>
</dbReference>
<dbReference type="RefSeq" id="WP_012384237.1">
    <property type="nucleotide sequence ID" value="NC_010581.1"/>
</dbReference>
<dbReference type="SMR" id="B2IJK8"/>
<dbReference type="STRING" id="395963.Bind_1238"/>
<dbReference type="KEGG" id="bid:Bind_1238"/>
<dbReference type="eggNOG" id="COG1570">
    <property type="taxonomic scope" value="Bacteria"/>
</dbReference>
<dbReference type="HOGENOM" id="CLU_023625_3_1_5"/>
<dbReference type="OrthoDB" id="9802795at2"/>
<dbReference type="Proteomes" id="UP000001695">
    <property type="component" value="Chromosome"/>
</dbReference>
<dbReference type="GO" id="GO:0005737">
    <property type="term" value="C:cytoplasm"/>
    <property type="evidence" value="ECO:0007669"/>
    <property type="project" value="UniProtKB-SubCell"/>
</dbReference>
<dbReference type="GO" id="GO:0009318">
    <property type="term" value="C:exodeoxyribonuclease VII complex"/>
    <property type="evidence" value="ECO:0007669"/>
    <property type="project" value="InterPro"/>
</dbReference>
<dbReference type="GO" id="GO:0008855">
    <property type="term" value="F:exodeoxyribonuclease VII activity"/>
    <property type="evidence" value="ECO:0007669"/>
    <property type="project" value="UniProtKB-UniRule"/>
</dbReference>
<dbReference type="GO" id="GO:0003676">
    <property type="term" value="F:nucleic acid binding"/>
    <property type="evidence" value="ECO:0007669"/>
    <property type="project" value="InterPro"/>
</dbReference>
<dbReference type="GO" id="GO:0006308">
    <property type="term" value="P:DNA catabolic process"/>
    <property type="evidence" value="ECO:0007669"/>
    <property type="project" value="UniProtKB-UniRule"/>
</dbReference>
<dbReference type="CDD" id="cd04489">
    <property type="entry name" value="ExoVII_LU_OBF"/>
    <property type="match status" value="1"/>
</dbReference>
<dbReference type="HAMAP" id="MF_00378">
    <property type="entry name" value="Exonuc_7_L"/>
    <property type="match status" value="1"/>
</dbReference>
<dbReference type="InterPro" id="IPR003753">
    <property type="entry name" value="Exonuc_VII_L"/>
</dbReference>
<dbReference type="InterPro" id="IPR020579">
    <property type="entry name" value="Exonuc_VII_lsu_C"/>
</dbReference>
<dbReference type="InterPro" id="IPR025824">
    <property type="entry name" value="OB-fold_nuc-bd_dom"/>
</dbReference>
<dbReference type="NCBIfam" id="TIGR00237">
    <property type="entry name" value="xseA"/>
    <property type="match status" value="1"/>
</dbReference>
<dbReference type="PANTHER" id="PTHR30008">
    <property type="entry name" value="EXODEOXYRIBONUCLEASE 7 LARGE SUBUNIT"/>
    <property type="match status" value="1"/>
</dbReference>
<dbReference type="PANTHER" id="PTHR30008:SF0">
    <property type="entry name" value="EXODEOXYRIBONUCLEASE 7 LARGE SUBUNIT"/>
    <property type="match status" value="1"/>
</dbReference>
<dbReference type="Pfam" id="PF02601">
    <property type="entry name" value="Exonuc_VII_L"/>
    <property type="match status" value="2"/>
</dbReference>
<dbReference type="Pfam" id="PF13742">
    <property type="entry name" value="tRNA_anti_2"/>
    <property type="match status" value="1"/>
</dbReference>
<reference key="1">
    <citation type="journal article" date="2010" name="J. Bacteriol.">
        <title>Complete genome sequence of Beijerinckia indica subsp. indica.</title>
        <authorList>
            <person name="Tamas I."/>
            <person name="Dedysh S.N."/>
            <person name="Liesack W."/>
            <person name="Stott M.B."/>
            <person name="Alam M."/>
            <person name="Murrell J.C."/>
            <person name="Dunfield P.F."/>
        </authorList>
    </citation>
    <scope>NUCLEOTIDE SEQUENCE [LARGE SCALE GENOMIC DNA]</scope>
    <source>
        <strain>ATCC 9039 / DSM 1715 / NCIMB 8712</strain>
    </source>
</reference>
<organism>
    <name type="scientific">Beijerinckia indica subsp. indica (strain ATCC 9039 / DSM 1715 / NCIMB 8712)</name>
    <dbReference type="NCBI Taxonomy" id="395963"/>
    <lineage>
        <taxon>Bacteria</taxon>
        <taxon>Pseudomonadati</taxon>
        <taxon>Pseudomonadota</taxon>
        <taxon>Alphaproteobacteria</taxon>
        <taxon>Hyphomicrobiales</taxon>
        <taxon>Beijerinckiaceae</taxon>
        <taxon>Beijerinckia</taxon>
    </lineage>
</organism>
<evidence type="ECO:0000255" key="1">
    <source>
        <dbReference type="HAMAP-Rule" id="MF_00378"/>
    </source>
</evidence>
<evidence type="ECO:0000256" key="2">
    <source>
        <dbReference type="SAM" id="MobiDB-lite"/>
    </source>
</evidence>
<accession>B2IJK8</accession>
<gene>
    <name evidence="1" type="primary">xseA</name>
    <name type="ordered locus">Bind_1238</name>
</gene>
<sequence length="549" mass="60338">MIGHLAAMLPPPSTNSPELTVSELSAALKRTLEDRFGIVRLRGEISNYRGPHSSGHAYFCLKDQNARIDAVIWKTTFMRLKVKPEEGLEVIATGKITTYAGKSSYQIVVEAIEPAGLGALMALFEARRRQLASEGLFDEERKRALPFLPAVIGVITSPTGAVIRDILHRITERFPRPVLLWPVRVQGETAAAEVSAAIEGFNALPVTGQGPLHRPDLLIVARGGGSLEDLWGFNEENVVRAAAASSIPLIAAIGHETDWTLIDYAADLRAPTPTGAAEKAVPVRADLLTSLNDLQRRHAGAAYRLLERRRSDLRALARALPQADSLLATPRQRLDRTATRLATACLRAQDQRGLVLGRLAHRLSRQAPHASLARLGQKLEAFGRGLGRACEIAQERRRQSLLHLGIRLTQNFTQGIRVERERVHGRRQKLASLDNRLRQAMSLTLSQRQARLANLAQLTRSLSYHAVLARGFALVRDETGQPLRRAADIIENHVLTLEFSDGCRQAVAGALVATDPPVDPKPTRKPVQKSSSPKPSSRKPKKSQQEDLF</sequence>
<feature type="chain" id="PRO_1000205668" description="Exodeoxyribonuclease 7 large subunit">
    <location>
        <begin position="1"/>
        <end position="549"/>
    </location>
</feature>
<feature type="region of interest" description="Disordered" evidence="2">
    <location>
        <begin position="511"/>
        <end position="549"/>
    </location>
</feature>
<keyword id="KW-0963">Cytoplasm</keyword>
<keyword id="KW-0269">Exonuclease</keyword>
<keyword id="KW-0378">Hydrolase</keyword>
<keyword id="KW-0540">Nuclease</keyword>
<keyword id="KW-1185">Reference proteome</keyword>
<proteinExistence type="inferred from homology"/>
<name>EX7L_BEII9</name>
<comment type="function">
    <text evidence="1">Bidirectionally degrades single-stranded DNA into large acid-insoluble oligonucleotides, which are then degraded further into small acid-soluble oligonucleotides.</text>
</comment>
<comment type="catalytic activity">
    <reaction evidence="1">
        <text>Exonucleolytic cleavage in either 5'- to 3'- or 3'- to 5'-direction to yield nucleoside 5'-phosphates.</text>
        <dbReference type="EC" id="3.1.11.6"/>
    </reaction>
</comment>
<comment type="subunit">
    <text evidence="1">Heterooligomer composed of large and small subunits.</text>
</comment>
<comment type="subcellular location">
    <subcellularLocation>
        <location evidence="1">Cytoplasm</location>
    </subcellularLocation>
</comment>
<comment type="similarity">
    <text evidence="1">Belongs to the XseA family.</text>
</comment>
<protein>
    <recommendedName>
        <fullName evidence="1">Exodeoxyribonuclease 7 large subunit</fullName>
        <ecNumber evidence="1">3.1.11.6</ecNumber>
    </recommendedName>
    <alternativeName>
        <fullName evidence="1">Exodeoxyribonuclease VII large subunit</fullName>
        <shortName evidence="1">Exonuclease VII large subunit</shortName>
    </alternativeName>
</protein>